<name>HMGCL_MOUSE</name>
<dbReference type="EC" id="4.1.3.4" evidence="2"/>
<dbReference type="EMBL" id="S65036">
    <property type="protein sequence ID" value="AAB27965.1"/>
    <property type="molecule type" value="mRNA"/>
</dbReference>
<dbReference type="EMBL" id="U49878">
    <property type="protein sequence ID" value="AAB03107.1"/>
    <property type="molecule type" value="Genomic_DNA"/>
</dbReference>
<dbReference type="EMBL" id="U49870">
    <property type="protein sequence ID" value="AAB03107.1"/>
    <property type="status" value="JOINED"/>
    <property type="molecule type" value="Genomic_DNA"/>
</dbReference>
<dbReference type="EMBL" id="U49871">
    <property type="protein sequence ID" value="AAB03107.1"/>
    <property type="status" value="JOINED"/>
    <property type="molecule type" value="Genomic_DNA"/>
</dbReference>
<dbReference type="EMBL" id="U49872">
    <property type="protein sequence ID" value="AAB03107.1"/>
    <property type="status" value="JOINED"/>
    <property type="molecule type" value="Genomic_DNA"/>
</dbReference>
<dbReference type="EMBL" id="U49873">
    <property type="protein sequence ID" value="AAB03107.1"/>
    <property type="status" value="JOINED"/>
    <property type="molecule type" value="Genomic_DNA"/>
</dbReference>
<dbReference type="EMBL" id="U49874">
    <property type="protein sequence ID" value="AAB03107.1"/>
    <property type="status" value="JOINED"/>
    <property type="molecule type" value="Genomic_DNA"/>
</dbReference>
<dbReference type="EMBL" id="U49875">
    <property type="protein sequence ID" value="AAB03107.1"/>
    <property type="status" value="JOINED"/>
    <property type="molecule type" value="Genomic_DNA"/>
</dbReference>
<dbReference type="EMBL" id="U49876">
    <property type="protein sequence ID" value="AAB03107.1"/>
    <property type="status" value="JOINED"/>
    <property type="molecule type" value="Genomic_DNA"/>
</dbReference>
<dbReference type="EMBL" id="U49877">
    <property type="protein sequence ID" value="AAB03107.1"/>
    <property type="status" value="JOINED"/>
    <property type="molecule type" value="Genomic_DNA"/>
</dbReference>
<dbReference type="EMBL" id="AK132035">
    <property type="protein sequence ID" value="BAE20956.1"/>
    <property type="molecule type" value="mRNA"/>
</dbReference>
<dbReference type="EMBL" id="AK145251">
    <property type="protein sequence ID" value="BAE26328.1"/>
    <property type="molecule type" value="mRNA"/>
</dbReference>
<dbReference type="EMBL" id="AK154033">
    <property type="protein sequence ID" value="BAE32329.1"/>
    <property type="molecule type" value="mRNA"/>
</dbReference>
<dbReference type="EMBL" id="AL672076">
    <property type="status" value="NOT_ANNOTATED_CDS"/>
    <property type="molecule type" value="Genomic_DNA"/>
</dbReference>
<dbReference type="EMBL" id="CH466552">
    <property type="protein sequence ID" value="EDL29963.1"/>
    <property type="molecule type" value="Genomic_DNA"/>
</dbReference>
<dbReference type="EMBL" id="BC025440">
    <property type="protein sequence ID" value="AAH25440.1"/>
    <property type="molecule type" value="mRNA"/>
</dbReference>
<dbReference type="CCDS" id="CCDS18795.1"/>
<dbReference type="RefSeq" id="NP_032280.2">
    <property type="nucleotide sequence ID" value="NM_008254.4"/>
</dbReference>
<dbReference type="SMR" id="P38060"/>
<dbReference type="BioGRID" id="200337">
    <property type="interactions" value="6"/>
</dbReference>
<dbReference type="FunCoup" id="P38060">
    <property type="interactions" value="1780"/>
</dbReference>
<dbReference type="IntAct" id="P38060">
    <property type="interactions" value="2"/>
</dbReference>
<dbReference type="STRING" id="10090.ENSMUSP00000030432"/>
<dbReference type="GlyGen" id="P38060">
    <property type="glycosylation" value="2 sites, 1 O-linked glycan (1 site)"/>
</dbReference>
<dbReference type="iPTMnet" id="P38060"/>
<dbReference type="PhosphoSitePlus" id="P38060"/>
<dbReference type="SwissPalm" id="P38060"/>
<dbReference type="jPOST" id="P38060"/>
<dbReference type="PaxDb" id="10090-ENSMUSP00000030432"/>
<dbReference type="PeptideAtlas" id="P38060"/>
<dbReference type="ProteomicsDB" id="273366"/>
<dbReference type="Pumba" id="P38060"/>
<dbReference type="Antibodypedia" id="1373">
    <property type="antibodies" value="334 antibodies from 29 providers"/>
</dbReference>
<dbReference type="DNASU" id="15356"/>
<dbReference type="Ensembl" id="ENSMUST00000030432.8">
    <property type="protein sequence ID" value="ENSMUSP00000030432.8"/>
    <property type="gene ID" value="ENSMUSG00000028672.14"/>
</dbReference>
<dbReference type="GeneID" id="15356"/>
<dbReference type="KEGG" id="mmu:15356"/>
<dbReference type="UCSC" id="uc012dnc.1">
    <property type="organism name" value="mouse"/>
</dbReference>
<dbReference type="AGR" id="MGI:96158"/>
<dbReference type="CTD" id="3155"/>
<dbReference type="MGI" id="MGI:96158">
    <property type="gene designation" value="Hmgcl"/>
</dbReference>
<dbReference type="VEuPathDB" id="HostDB:ENSMUSG00000028672"/>
<dbReference type="eggNOG" id="KOG2368">
    <property type="taxonomic scope" value="Eukaryota"/>
</dbReference>
<dbReference type="GeneTree" id="ENSGT00940000158484"/>
<dbReference type="HOGENOM" id="CLU_022138_3_1_1"/>
<dbReference type="InParanoid" id="P38060"/>
<dbReference type="OMA" id="FQMRNTH"/>
<dbReference type="OrthoDB" id="1905920at2759"/>
<dbReference type="PhylomeDB" id="P38060"/>
<dbReference type="TreeFam" id="TF105363"/>
<dbReference type="Reactome" id="R-MMU-77111">
    <property type="pathway name" value="Synthesis of Ketone Bodies"/>
</dbReference>
<dbReference type="Reactome" id="R-MMU-9033241">
    <property type="pathway name" value="Peroxisomal protein import"/>
</dbReference>
<dbReference type="UniPathway" id="UPA00896">
    <property type="reaction ID" value="UER00863"/>
</dbReference>
<dbReference type="BioGRID-ORCS" id="15356">
    <property type="hits" value="0 hits in 81 CRISPR screens"/>
</dbReference>
<dbReference type="ChiTaRS" id="Hmgcl">
    <property type="organism name" value="mouse"/>
</dbReference>
<dbReference type="PRO" id="PR:P38060"/>
<dbReference type="Proteomes" id="UP000000589">
    <property type="component" value="Chromosome 4"/>
</dbReference>
<dbReference type="RNAct" id="P38060">
    <property type="molecule type" value="protein"/>
</dbReference>
<dbReference type="Bgee" id="ENSMUSG00000028672">
    <property type="expression patterns" value="Expressed in ileal epithelium and 254 other cell types or tissues"/>
</dbReference>
<dbReference type="GO" id="GO:0005743">
    <property type="term" value="C:mitochondrial inner membrane"/>
    <property type="evidence" value="ECO:0007005"/>
    <property type="project" value="MGI"/>
</dbReference>
<dbReference type="GO" id="GO:0005759">
    <property type="term" value="C:mitochondrial matrix"/>
    <property type="evidence" value="ECO:0007669"/>
    <property type="project" value="UniProtKB-SubCell"/>
</dbReference>
<dbReference type="GO" id="GO:0005739">
    <property type="term" value="C:mitochondrion"/>
    <property type="evidence" value="ECO:0000314"/>
    <property type="project" value="MGI"/>
</dbReference>
<dbReference type="GO" id="GO:0005777">
    <property type="term" value="C:peroxisome"/>
    <property type="evidence" value="ECO:0007669"/>
    <property type="project" value="UniProtKB-SubCell"/>
</dbReference>
<dbReference type="GO" id="GO:0032991">
    <property type="term" value="C:protein-containing complex"/>
    <property type="evidence" value="ECO:0007669"/>
    <property type="project" value="Ensembl"/>
</dbReference>
<dbReference type="GO" id="GO:0004419">
    <property type="term" value="F:hydroxymethylglutaryl-CoA lyase activity"/>
    <property type="evidence" value="ECO:0000250"/>
    <property type="project" value="UniProtKB"/>
</dbReference>
<dbReference type="GO" id="GO:0000287">
    <property type="term" value="F:magnesium ion binding"/>
    <property type="evidence" value="ECO:0007669"/>
    <property type="project" value="Ensembl"/>
</dbReference>
<dbReference type="GO" id="GO:0030145">
    <property type="term" value="F:manganese ion binding"/>
    <property type="evidence" value="ECO:0007669"/>
    <property type="project" value="Ensembl"/>
</dbReference>
<dbReference type="GO" id="GO:0046872">
    <property type="term" value="F:metal ion binding"/>
    <property type="evidence" value="ECO:0000250"/>
    <property type="project" value="UniProtKB"/>
</dbReference>
<dbReference type="GO" id="GO:0005198">
    <property type="term" value="F:structural molecule activity"/>
    <property type="evidence" value="ECO:0007669"/>
    <property type="project" value="Ensembl"/>
</dbReference>
<dbReference type="GO" id="GO:0046951">
    <property type="term" value="P:ketone body biosynthetic process"/>
    <property type="evidence" value="ECO:0000250"/>
    <property type="project" value="UniProtKB"/>
</dbReference>
<dbReference type="GO" id="GO:0007005">
    <property type="term" value="P:mitochondrion organization"/>
    <property type="evidence" value="ECO:0000315"/>
    <property type="project" value="MGI"/>
</dbReference>
<dbReference type="CDD" id="cd07938">
    <property type="entry name" value="DRE_TIM_HMGL"/>
    <property type="match status" value="1"/>
</dbReference>
<dbReference type="FunFam" id="3.20.20.70:FF:000038">
    <property type="entry name" value="Hydroxymethylglutaryl-CoA lyase, mitochondrial"/>
    <property type="match status" value="1"/>
</dbReference>
<dbReference type="Gene3D" id="3.20.20.70">
    <property type="entry name" value="Aldolase class I"/>
    <property type="match status" value="1"/>
</dbReference>
<dbReference type="InterPro" id="IPR013785">
    <property type="entry name" value="Aldolase_TIM"/>
</dbReference>
<dbReference type="InterPro" id="IPR000138">
    <property type="entry name" value="HMG_CoA_lyase_AS"/>
</dbReference>
<dbReference type="InterPro" id="IPR043594">
    <property type="entry name" value="HMGL"/>
</dbReference>
<dbReference type="InterPro" id="IPR000891">
    <property type="entry name" value="PYR_CT"/>
</dbReference>
<dbReference type="NCBIfam" id="NF004283">
    <property type="entry name" value="PRK05692.1"/>
    <property type="match status" value="1"/>
</dbReference>
<dbReference type="PANTHER" id="PTHR42738">
    <property type="entry name" value="HYDROXYMETHYLGLUTARYL-COA LYASE"/>
    <property type="match status" value="1"/>
</dbReference>
<dbReference type="PANTHER" id="PTHR42738:SF1">
    <property type="entry name" value="HYDROXYMETHYLGLUTARYL-COA LYASE, MITOCHONDRIAL"/>
    <property type="match status" value="1"/>
</dbReference>
<dbReference type="Pfam" id="PF00682">
    <property type="entry name" value="HMGL-like"/>
    <property type="match status" value="1"/>
</dbReference>
<dbReference type="SUPFAM" id="SSF51569">
    <property type="entry name" value="Aldolase"/>
    <property type="match status" value="1"/>
</dbReference>
<dbReference type="PROSITE" id="PS01062">
    <property type="entry name" value="HMG_COA_LYASE"/>
    <property type="match status" value="1"/>
</dbReference>
<dbReference type="PROSITE" id="PS50991">
    <property type="entry name" value="PYR_CT"/>
    <property type="match status" value="1"/>
</dbReference>
<reference key="1">
    <citation type="journal article" date="1993" name="Mamm. Genome">
        <title>3-hydroxy-3-methylglutaryl coenzyme A lyase (HL): cloning and characterization of a mouse liver HL cDNA and subchromosomal mapping of the human and mouse HL genes.</title>
        <authorList>
            <person name="Wang S."/>
            <person name="Nadeau J.H."/>
            <person name="Duncan A."/>
            <person name="Robert M.-F."/>
            <person name="Fontaine G."/>
            <person name="Schappert K."/>
            <person name="Johnson K.R."/>
            <person name="Zietkiewicz E."/>
            <person name="Hruz P."/>
            <person name="Miziorko H."/>
        </authorList>
    </citation>
    <scope>NUCLEOTIDE SEQUENCE [MRNA]</scope>
    <source>
        <tissue>Liver</tissue>
    </source>
</reference>
<reference key="2">
    <citation type="journal article" date="1996" name="Genomics">
        <title>3-hydroxy-3-methylglutaryl CoA lyase (HL): mouse and human HL gene (HMGCL) cloning and detection of large gene deletions in two unrelated HL-deficient patients.</title>
        <authorList>
            <person name="Wang S.P."/>
            <person name="Robert M.-F."/>
            <person name="Gibson K.M."/>
            <person name="Wanders R.J.A."/>
            <person name="Mitchell G.A."/>
        </authorList>
    </citation>
    <scope>NUCLEOTIDE SEQUENCE [GENOMIC DNA]</scope>
    <source>
        <strain>129</strain>
    </source>
</reference>
<reference key="3">
    <citation type="journal article" date="2005" name="Science">
        <title>The transcriptional landscape of the mammalian genome.</title>
        <authorList>
            <person name="Carninci P."/>
            <person name="Kasukawa T."/>
            <person name="Katayama S."/>
            <person name="Gough J."/>
            <person name="Frith M.C."/>
            <person name="Maeda N."/>
            <person name="Oyama R."/>
            <person name="Ravasi T."/>
            <person name="Lenhard B."/>
            <person name="Wells C."/>
            <person name="Kodzius R."/>
            <person name="Shimokawa K."/>
            <person name="Bajic V.B."/>
            <person name="Brenner S.E."/>
            <person name="Batalov S."/>
            <person name="Forrest A.R."/>
            <person name="Zavolan M."/>
            <person name="Davis M.J."/>
            <person name="Wilming L.G."/>
            <person name="Aidinis V."/>
            <person name="Allen J.E."/>
            <person name="Ambesi-Impiombato A."/>
            <person name="Apweiler R."/>
            <person name="Aturaliya R.N."/>
            <person name="Bailey T.L."/>
            <person name="Bansal M."/>
            <person name="Baxter L."/>
            <person name="Beisel K.W."/>
            <person name="Bersano T."/>
            <person name="Bono H."/>
            <person name="Chalk A.M."/>
            <person name="Chiu K.P."/>
            <person name="Choudhary V."/>
            <person name="Christoffels A."/>
            <person name="Clutterbuck D.R."/>
            <person name="Crowe M.L."/>
            <person name="Dalla E."/>
            <person name="Dalrymple B.P."/>
            <person name="de Bono B."/>
            <person name="Della Gatta G."/>
            <person name="di Bernardo D."/>
            <person name="Down T."/>
            <person name="Engstrom P."/>
            <person name="Fagiolini M."/>
            <person name="Faulkner G."/>
            <person name="Fletcher C.F."/>
            <person name="Fukushima T."/>
            <person name="Furuno M."/>
            <person name="Futaki S."/>
            <person name="Gariboldi M."/>
            <person name="Georgii-Hemming P."/>
            <person name="Gingeras T.R."/>
            <person name="Gojobori T."/>
            <person name="Green R.E."/>
            <person name="Gustincich S."/>
            <person name="Harbers M."/>
            <person name="Hayashi Y."/>
            <person name="Hensch T.K."/>
            <person name="Hirokawa N."/>
            <person name="Hill D."/>
            <person name="Huminiecki L."/>
            <person name="Iacono M."/>
            <person name="Ikeo K."/>
            <person name="Iwama A."/>
            <person name="Ishikawa T."/>
            <person name="Jakt M."/>
            <person name="Kanapin A."/>
            <person name="Katoh M."/>
            <person name="Kawasawa Y."/>
            <person name="Kelso J."/>
            <person name="Kitamura H."/>
            <person name="Kitano H."/>
            <person name="Kollias G."/>
            <person name="Krishnan S.P."/>
            <person name="Kruger A."/>
            <person name="Kummerfeld S.K."/>
            <person name="Kurochkin I.V."/>
            <person name="Lareau L.F."/>
            <person name="Lazarevic D."/>
            <person name="Lipovich L."/>
            <person name="Liu J."/>
            <person name="Liuni S."/>
            <person name="McWilliam S."/>
            <person name="Madan Babu M."/>
            <person name="Madera M."/>
            <person name="Marchionni L."/>
            <person name="Matsuda H."/>
            <person name="Matsuzawa S."/>
            <person name="Miki H."/>
            <person name="Mignone F."/>
            <person name="Miyake S."/>
            <person name="Morris K."/>
            <person name="Mottagui-Tabar S."/>
            <person name="Mulder N."/>
            <person name="Nakano N."/>
            <person name="Nakauchi H."/>
            <person name="Ng P."/>
            <person name="Nilsson R."/>
            <person name="Nishiguchi S."/>
            <person name="Nishikawa S."/>
            <person name="Nori F."/>
            <person name="Ohara O."/>
            <person name="Okazaki Y."/>
            <person name="Orlando V."/>
            <person name="Pang K.C."/>
            <person name="Pavan W.J."/>
            <person name="Pavesi G."/>
            <person name="Pesole G."/>
            <person name="Petrovsky N."/>
            <person name="Piazza S."/>
            <person name="Reed J."/>
            <person name="Reid J.F."/>
            <person name="Ring B.Z."/>
            <person name="Ringwald M."/>
            <person name="Rost B."/>
            <person name="Ruan Y."/>
            <person name="Salzberg S.L."/>
            <person name="Sandelin A."/>
            <person name="Schneider C."/>
            <person name="Schoenbach C."/>
            <person name="Sekiguchi K."/>
            <person name="Semple C.A."/>
            <person name="Seno S."/>
            <person name="Sessa L."/>
            <person name="Sheng Y."/>
            <person name="Shibata Y."/>
            <person name="Shimada H."/>
            <person name="Shimada K."/>
            <person name="Silva D."/>
            <person name="Sinclair B."/>
            <person name="Sperling S."/>
            <person name="Stupka E."/>
            <person name="Sugiura K."/>
            <person name="Sultana R."/>
            <person name="Takenaka Y."/>
            <person name="Taki K."/>
            <person name="Tammoja K."/>
            <person name="Tan S.L."/>
            <person name="Tang S."/>
            <person name="Taylor M.S."/>
            <person name="Tegner J."/>
            <person name="Teichmann S.A."/>
            <person name="Ueda H.R."/>
            <person name="van Nimwegen E."/>
            <person name="Verardo R."/>
            <person name="Wei C.L."/>
            <person name="Yagi K."/>
            <person name="Yamanishi H."/>
            <person name="Zabarovsky E."/>
            <person name="Zhu S."/>
            <person name="Zimmer A."/>
            <person name="Hide W."/>
            <person name="Bult C."/>
            <person name="Grimmond S.M."/>
            <person name="Teasdale R.D."/>
            <person name="Liu E.T."/>
            <person name="Brusic V."/>
            <person name="Quackenbush J."/>
            <person name="Wahlestedt C."/>
            <person name="Mattick J.S."/>
            <person name="Hume D.A."/>
            <person name="Kai C."/>
            <person name="Sasaki D."/>
            <person name="Tomaru Y."/>
            <person name="Fukuda S."/>
            <person name="Kanamori-Katayama M."/>
            <person name="Suzuki M."/>
            <person name="Aoki J."/>
            <person name="Arakawa T."/>
            <person name="Iida J."/>
            <person name="Imamura K."/>
            <person name="Itoh M."/>
            <person name="Kato T."/>
            <person name="Kawaji H."/>
            <person name="Kawagashira N."/>
            <person name="Kawashima T."/>
            <person name="Kojima M."/>
            <person name="Kondo S."/>
            <person name="Konno H."/>
            <person name="Nakano K."/>
            <person name="Ninomiya N."/>
            <person name="Nishio T."/>
            <person name="Okada M."/>
            <person name="Plessy C."/>
            <person name="Shibata K."/>
            <person name="Shiraki T."/>
            <person name="Suzuki S."/>
            <person name="Tagami M."/>
            <person name="Waki K."/>
            <person name="Watahiki A."/>
            <person name="Okamura-Oho Y."/>
            <person name="Suzuki H."/>
            <person name="Kawai J."/>
            <person name="Hayashizaki Y."/>
        </authorList>
    </citation>
    <scope>NUCLEOTIDE SEQUENCE [LARGE SCALE MRNA]</scope>
    <source>
        <strain>C57BL/6J</strain>
        <strain>NOD</strain>
        <tissue>Hippocampus</tissue>
        <tissue>Mammary gland</tissue>
        <tissue>Thymus</tissue>
    </source>
</reference>
<reference key="4">
    <citation type="journal article" date="2009" name="PLoS Biol.">
        <title>Lineage-specific biology revealed by a finished genome assembly of the mouse.</title>
        <authorList>
            <person name="Church D.M."/>
            <person name="Goodstadt L."/>
            <person name="Hillier L.W."/>
            <person name="Zody M.C."/>
            <person name="Goldstein S."/>
            <person name="She X."/>
            <person name="Bult C.J."/>
            <person name="Agarwala R."/>
            <person name="Cherry J.L."/>
            <person name="DiCuccio M."/>
            <person name="Hlavina W."/>
            <person name="Kapustin Y."/>
            <person name="Meric P."/>
            <person name="Maglott D."/>
            <person name="Birtle Z."/>
            <person name="Marques A.C."/>
            <person name="Graves T."/>
            <person name="Zhou S."/>
            <person name="Teague B."/>
            <person name="Potamousis K."/>
            <person name="Churas C."/>
            <person name="Place M."/>
            <person name="Herschleb J."/>
            <person name="Runnheim R."/>
            <person name="Forrest D."/>
            <person name="Amos-Landgraf J."/>
            <person name="Schwartz D.C."/>
            <person name="Cheng Z."/>
            <person name="Lindblad-Toh K."/>
            <person name="Eichler E.E."/>
            <person name="Ponting C.P."/>
        </authorList>
    </citation>
    <scope>NUCLEOTIDE SEQUENCE [LARGE SCALE GENOMIC DNA]</scope>
    <source>
        <strain>C57BL/6J</strain>
    </source>
</reference>
<reference key="5">
    <citation type="submission" date="2005-09" db="EMBL/GenBank/DDBJ databases">
        <authorList>
            <person name="Mural R.J."/>
            <person name="Adams M.D."/>
            <person name="Myers E.W."/>
            <person name="Smith H.O."/>
            <person name="Venter J.C."/>
        </authorList>
    </citation>
    <scope>NUCLEOTIDE SEQUENCE [LARGE SCALE GENOMIC DNA]</scope>
</reference>
<reference key="6">
    <citation type="journal article" date="2004" name="Genome Res.">
        <title>The status, quality, and expansion of the NIH full-length cDNA project: the Mammalian Gene Collection (MGC).</title>
        <authorList>
            <consortium name="The MGC Project Team"/>
        </authorList>
    </citation>
    <scope>NUCLEOTIDE SEQUENCE [LARGE SCALE MRNA]</scope>
    <source>
        <strain>FVB/N</strain>
        <tissue>Liver</tissue>
    </source>
</reference>
<reference key="7">
    <citation type="journal article" date="1994" name="J. Biol. Chem.">
        <title>3-Hydroxy-3-methylglutaryl-CoA lyase is present in mouse and human liver peroxisomes.</title>
        <authorList>
            <person name="Ashmarina L.I."/>
            <person name="Rusnak N."/>
            <person name="Miziorko H.M."/>
            <person name="Mitchell G.A."/>
        </authorList>
    </citation>
    <scope>SUBCELLULAR LOCATION</scope>
</reference>
<reference key="8">
    <citation type="journal article" date="2010" name="Cell">
        <title>A tissue-specific atlas of mouse protein phosphorylation and expression.</title>
        <authorList>
            <person name="Huttlin E.L."/>
            <person name="Jedrychowski M.P."/>
            <person name="Elias J.E."/>
            <person name="Goswami T."/>
            <person name="Rad R."/>
            <person name="Beausoleil S.A."/>
            <person name="Villen J."/>
            <person name="Haas W."/>
            <person name="Sowa M.E."/>
            <person name="Gygi S.P."/>
        </authorList>
    </citation>
    <scope>IDENTIFICATION BY MASS SPECTROMETRY [LARGE SCALE ANALYSIS]</scope>
    <source>
        <tissue>Brain</tissue>
        <tissue>Brown adipose tissue</tissue>
        <tissue>Heart</tissue>
        <tissue>Kidney</tissue>
        <tissue>Liver</tissue>
        <tissue>Lung</tissue>
        <tissue>Pancreas</tissue>
        <tissue>Spleen</tissue>
        <tissue>Testis</tissue>
    </source>
</reference>
<reference key="9">
    <citation type="journal article" date="2013" name="Mol. Cell">
        <title>SIRT5-mediated lysine desuccinylation impacts diverse metabolic pathways.</title>
        <authorList>
            <person name="Park J."/>
            <person name="Chen Y."/>
            <person name="Tishkoff D.X."/>
            <person name="Peng C."/>
            <person name="Tan M."/>
            <person name="Dai L."/>
            <person name="Xie Z."/>
            <person name="Zhang Y."/>
            <person name="Zwaans B.M."/>
            <person name="Skinner M.E."/>
            <person name="Lombard D.B."/>
            <person name="Zhao Y."/>
        </authorList>
    </citation>
    <scope>ACETYLATION [LARGE SCALE ANALYSIS] AT LYS-48</scope>
    <scope>SUCCINYLATION [LARGE SCALE ANALYSIS] AT LYS-48; LYS-137 AND LYS-179</scope>
    <scope>IDENTIFICATION BY MASS SPECTROMETRY [LARGE SCALE ANALYSIS]</scope>
    <source>
        <tissue>Embryonic fibroblast</tissue>
        <tissue>Liver</tissue>
    </source>
</reference>
<reference key="10">
    <citation type="journal article" date="2013" name="Proc. Natl. Acad. Sci. U.S.A.">
        <title>Label-free quantitative proteomics of the lysine acetylome in mitochondria identifies substrates of SIRT3 in metabolic pathways.</title>
        <authorList>
            <person name="Rardin M.J."/>
            <person name="Newman J.C."/>
            <person name="Held J.M."/>
            <person name="Cusack M.P."/>
            <person name="Sorensen D.J."/>
            <person name="Li B."/>
            <person name="Schilling B."/>
            <person name="Mooney S.D."/>
            <person name="Kahn C.R."/>
            <person name="Verdin E."/>
            <person name="Gibson B.W."/>
        </authorList>
    </citation>
    <scope>ACETYLATION [LARGE SCALE ANALYSIS] AT LYS-48; LYS-111; LYS-137; LYS-179 AND LYS-324</scope>
    <scope>IDENTIFICATION BY MASS SPECTROMETRY [LARGE SCALE ANALYSIS]</scope>
    <source>
        <tissue>Liver</tissue>
    </source>
</reference>
<organism>
    <name type="scientific">Mus musculus</name>
    <name type="common">Mouse</name>
    <dbReference type="NCBI Taxonomy" id="10090"/>
    <lineage>
        <taxon>Eukaryota</taxon>
        <taxon>Metazoa</taxon>
        <taxon>Chordata</taxon>
        <taxon>Craniata</taxon>
        <taxon>Vertebrata</taxon>
        <taxon>Euteleostomi</taxon>
        <taxon>Mammalia</taxon>
        <taxon>Eutheria</taxon>
        <taxon>Euarchontoglires</taxon>
        <taxon>Glires</taxon>
        <taxon>Rodentia</taxon>
        <taxon>Myomorpha</taxon>
        <taxon>Muroidea</taxon>
        <taxon>Muridae</taxon>
        <taxon>Murinae</taxon>
        <taxon>Mus</taxon>
        <taxon>Mus</taxon>
    </lineage>
</organism>
<protein>
    <recommendedName>
        <fullName>Hydroxymethylglutaryl-CoA lyase, mitochondrial</fullName>
        <shortName evidence="7">HL</shortName>
        <shortName>HMG-CoA lyase</shortName>
        <ecNumber evidence="2">4.1.3.4</ecNumber>
    </recommendedName>
    <alternativeName>
        <fullName>3-hydroxy-3-methylglutarate-CoA lyase</fullName>
    </alternativeName>
</protein>
<keyword id="KW-0007">Acetylation</keyword>
<keyword id="KW-1015">Disulfide bond</keyword>
<keyword id="KW-0443">Lipid metabolism</keyword>
<keyword id="KW-0456">Lyase</keyword>
<keyword id="KW-0479">Metal-binding</keyword>
<keyword id="KW-0496">Mitochondrion</keyword>
<keyword id="KW-0576">Peroxisome</keyword>
<keyword id="KW-1185">Reference proteome</keyword>
<keyword id="KW-0809">Transit peptide</keyword>
<feature type="transit peptide" description="Mitochondrion" evidence="1">
    <location>
        <begin position="1"/>
        <end position="27"/>
    </location>
</feature>
<feature type="chain" id="PRO_0000013480" description="Hydroxymethylglutaryl-CoA lyase, mitochondrial">
    <location>
        <begin position="28"/>
        <end position="325"/>
    </location>
</feature>
<feature type="domain" description="Pyruvate carboxyltransferase" evidence="4">
    <location>
        <begin position="33"/>
        <end position="300"/>
    </location>
</feature>
<feature type="short sequence motif" description="Microbody targeting signal" evidence="3">
    <location>
        <begin position="323"/>
        <end position="325"/>
    </location>
</feature>
<feature type="active site" evidence="5">
    <location>
        <position position="266"/>
    </location>
</feature>
<feature type="binding site" evidence="1">
    <location>
        <position position="41"/>
    </location>
    <ligand>
        <name>substrate</name>
    </ligand>
</feature>
<feature type="binding site" evidence="1">
    <location>
        <position position="42"/>
    </location>
    <ligand>
        <name>a divalent metal cation</name>
        <dbReference type="ChEBI" id="CHEBI:60240"/>
    </ligand>
</feature>
<feature type="binding site" evidence="1">
    <location>
        <position position="233"/>
    </location>
    <ligand>
        <name>a divalent metal cation</name>
        <dbReference type="ChEBI" id="CHEBI:60240"/>
    </ligand>
</feature>
<feature type="binding site" evidence="1">
    <location>
        <position position="235"/>
    </location>
    <ligand>
        <name>a divalent metal cation</name>
        <dbReference type="ChEBI" id="CHEBI:60240"/>
    </ligand>
</feature>
<feature type="binding site" evidence="1">
    <location>
        <position position="275"/>
    </location>
    <ligand>
        <name>a divalent metal cation</name>
        <dbReference type="ChEBI" id="CHEBI:60240"/>
    </ligand>
</feature>
<feature type="modified residue" description="N6-acetyllysine; alternate" evidence="9 10">
    <location>
        <position position="48"/>
    </location>
</feature>
<feature type="modified residue" description="N6-succinyllysine; alternate" evidence="10">
    <location>
        <position position="48"/>
    </location>
</feature>
<feature type="modified residue" description="N6-acetyllysine" evidence="9">
    <location>
        <position position="111"/>
    </location>
</feature>
<feature type="modified residue" description="N6-acetyllysine; alternate" evidence="9">
    <location>
        <position position="137"/>
    </location>
</feature>
<feature type="modified residue" description="N6-succinyllysine; alternate" evidence="10">
    <location>
        <position position="137"/>
    </location>
</feature>
<feature type="modified residue" description="N6-acetyllysine; alternate" evidence="9">
    <location>
        <position position="179"/>
    </location>
</feature>
<feature type="modified residue" description="N6-succinyllysine; alternate" evidence="10">
    <location>
        <position position="179"/>
    </location>
</feature>
<feature type="modified residue" description="N6-acetyllysine" evidence="9">
    <location>
        <position position="324"/>
    </location>
</feature>
<feature type="disulfide bond" description="Interchain" evidence="1">
    <location>
        <position position="323"/>
    </location>
</feature>
<feature type="sequence conflict" description="In Ref. 2; AAB03107." evidence="8" ref="2">
    <original>ML</original>
    <variation>IV</variation>
    <location>
        <begin position="62"/>
        <end position="63"/>
    </location>
</feature>
<feature type="sequence conflict" description="In Ref. 1; AAB27965." evidence="8" ref="1">
    <original>K</original>
    <variation>N</variation>
    <location>
        <position position="80"/>
    </location>
</feature>
<feature type="sequence conflict" description="In Ref. 1; AAB27965." evidence="8" ref="1">
    <original>A</original>
    <variation>G</variation>
    <location>
        <position position="231"/>
    </location>
</feature>
<feature type="sequence conflict" description="In Ref. 1; AAB27965." evidence="8" ref="1">
    <original>Y</original>
    <variation>I</variation>
    <location>
        <position position="238"/>
    </location>
</feature>
<gene>
    <name type="primary">Hmgcl</name>
</gene>
<accession>P38060</accession>
<accession>Q8QZS6</accession>
<sequence length="325" mass="34239">MASVRKAFPRRLVGLTSLRAVSTSSMGTLPKQVKIVEVGPRDGLQNEKSIVPTPVKIRLIDMLSEAGLPVIEATSFVSPKWVPQMADHSDVLKGIQKFPGINYPVLTPNMKGFEEAVAAGAKEVSVFGAVSELFTRKNANCSIEESFQRFAGVMQAAQAASISVRGYVSCALGCPYEGKVSPAKVAEVAKKLYSMGCYEISLGDTIGVGTPGLMKDMLTAVMHEVPVTALAVHCHDTYGQALANTLVALQMGVSVVDSSVAGLGGCPYAKGASGNLATEDLVYMLNGLGIHTGVNLQKLLEAGDFICQALNRKTSSKVAQATCKL</sequence>
<evidence type="ECO:0000250" key="1"/>
<evidence type="ECO:0000250" key="2">
    <source>
        <dbReference type="UniProtKB" id="P35914"/>
    </source>
</evidence>
<evidence type="ECO:0000255" key="3"/>
<evidence type="ECO:0000255" key="4">
    <source>
        <dbReference type="PROSITE-ProRule" id="PRU01151"/>
    </source>
</evidence>
<evidence type="ECO:0000255" key="5">
    <source>
        <dbReference type="PROSITE-ProRule" id="PRU10115"/>
    </source>
</evidence>
<evidence type="ECO:0000269" key="6">
    <source>
    </source>
</evidence>
<evidence type="ECO:0000303" key="7">
    <source>
    </source>
</evidence>
<evidence type="ECO:0000305" key="8"/>
<evidence type="ECO:0007744" key="9">
    <source>
    </source>
</evidence>
<evidence type="ECO:0007744" key="10">
    <source>
    </source>
</evidence>
<comment type="function">
    <text evidence="2">Mitochondrial 3-hydroxy-3-methylglutaryl-CoA lyase that catalyzes a cation-dependent cleavage of (S)-3-hydroxy-3-methylglutaryl-CoA into acetyl-CoA and acetoacetate, a key step in ketogenesis. Terminal step in leucine catabolism. Ketone bodies (beta-hydroxybutyrate, acetoacetate and acetone) are essential as an alternative source of energy to glucose, as lipid precursors and as regulators of metabolism.</text>
</comment>
<comment type="catalytic activity">
    <reaction evidence="2">
        <text>(3S)-3-hydroxy-3-methylglutaryl-CoA = acetoacetate + acetyl-CoA</text>
        <dbReference type="Rhea" id="RHEA:24404"/>
        <dbReference type="ChEBI" id="CHEBI:13705"/>
        <dbReference type="ChEBI" id="CHEBI:43074"/>
        <dbReference type="ChEBI" id="CHEBI:57288"/>
        <dbReference type="EC" id="4.1.3.4"/>
    </reaction>
</comment>
<comment type="pathway">
    <text>Metabolic intermediate metabolism; (S)-3-hydroxy-3-methylglutaryl-CoA degradation; acetoacetate from (S)-3-hydroxy-3-methylglutaryl-CoA: step 1/1.</text>
</comment>
<comment type="subunit">
    <text evidence="2">Homodimer; disulfide-linked. Can also form homotetramers.</text>
</comment>
<comment type="subcellular location">
    <subcellularLocation>
        <location evidence="6">Mitochondrion matrix</location>
    </subcellularLocation>
    <subcellularLocation>
        <location evidence="6">Peroxisome</location>
    </subcellularLocation>
    <text>Unprocessed form is peroxisomal.</text>
</comment>
<comment type="similarity">
    <text evidence="8">Belongs to the HMG-CoA lyase family.</text>
</comment>
<proteinExistence type="evidence at protein level"/>